<dbReference type="EC" id="2.1.1.33" evidence="2"/>
<dbReference type="EMBL" id="AE017198">
    <property type="protein sequence ID" value="AAS09440.1"/>
    <property type="molecule type" value="Genomic_DNA"/>
</dbReference>
<dbReference type="RefSeq" id="WP_011162354.1">
    <property type="nucleotide sequence ID" value="NC_005362.1"/>
</dbReference>
<dbReference type="SMR" id="Q74I98"/>
<dbReference type="KEGG" id="ljo:LJ_1667"/>
<dbReference type="PATRIC" id="fig|257314.6.peg.1493"/>
<dbReference type="eggNOG" id="COG0220">
    <property type="taxonomic scope" value="Bacteria"/>
</dbReference>
<dbReference type="HOGENOM" id="CLU_050910_2_1_9"/>
<dbReference type="UniPathway" id="UPA00989"/>
<dbReference type="Proteomes" id="UP000000581">
    <property type="component" value="Chromosome"/>
</dbReference>
<dbReference type="GO" id="GO:0043527">
    <property type="term" value="C:tRNA methyltransferase complex"/>
    <property type="evidence" value="ECO:0007669"/>
    <property type="project" value="TreeGrafter"/>
</dbReference>
<dbReference type="GO" id="GO:0008176">
    <property type="term" value="F:tRNA (guanine(46)-N7)-methyltransferase activity"/>
    <property type="evidence" value="ECO:0007669"/>
    <property type="project" value="UniProtKB-UniRule"/>
</dbReference>
<dbReference type="CDD" id="cd02440">
    <property type="entry name" value="AdoMet_MTases"/>
    <property type="match status" value="1"/>
</dbReference>
<dbReference type="FunFam" id="3.40.50.150:FF:000035">
    <property type="entry name" value="tRNA (guanine-N(7)-)-methyltransferase"/>
    <property type="match status" value="1"/>
</dbReference>
<dbReference type="Gene3D" id="3.40.50.150">
    <property type="entry name" value="Vaccinia Virus protein VP39"/>
    <property type="match status" value="1"/>
</dbReference>
<dbReference type="HAMAP" id="MF_01057">
    <property type="entry name" value="tRNA_methyltr_TrmB"/>
    <property type="match status" value="1"/>
</dbReference>
<dbReference type="InterPro" id="IPR029063">
    <property type="entry name" value="SAM-dependent_MTases_sf"/>
</dbReference>
<dbReference type="InterPro" id="IPR003358">
    <property type="entry name" value="tRNA_(Gua-N-7)_MeTrfase_Trmb"/>
</dbReference>
<dbReference type="InterPro" id="IPR055361">
    <property type="entry name" value="tRNA_methyltr_TrmB_bact"/>
</dbReference>
<dbReference type="NCBIfam" id="NF001080">
    <property type="entry name" value="PRK00121.2-2"/>
    <property type="match status" value="1"/>
</dbReference>
<dbReference type="NCBIfam" id="TIGR00091">
    <property type="entry name" value="tRNA (guanosine(46)-N7)-methyltransferase TrmB"/>
    <property type="match status" value="1"/>
</dbReference>
<dbReference type="PANTHER" id="PTHR23417">
    <property type="entry name" value="3-DEOXY-D-MANNO-OCTULOSONIC-ACID TRANSFERASE/TRNA GUANINE-N 7 - -METHYLTRANSFERASE"/>
    <property type="match status" value="1"/>
</dbReference>
<dbReference type="PANTHER" id="PTHR23417:SF14">
    <property type="entry name" value="PENTACOTRIPEPTIDE-REPEAT REGION OF PRORP DOMAIN-CONTAINING PROTEIN"/>
    <property type="match status" value="1"/>
</dbReference>
<dbReference type="Pfam" id="PF02390">
    <property type="entry name" value="Methyltransf_4"/>
    <property type="match status" value="1"/>
</dbReference>
<dbReference type="SUPFAM" id="SSF53335">
    <property type="entry name" value="S-adenosyl-L-methionine-dependent methyltransferases"/>
    <property type="match status" value="1"/>
</dbReference>
<dbReference type="PROSITE" id="PS51625">
    <property type="entry name" value="SAM_MT_TRMB"/>
    <property type="match status" value="1"/>
</dbReference>
<organism>
    <name type="scientific">Lactobacillus johnsonii (strain CNCM I-12250 / La1 / NCC 533)</name>
    <dbReference type="NCBI Taxonomy" id="257314"/>
    <lineage>
        <taxon>Bacteria</taxon>
        <taxon>Bacillati</taxon>
        <taxon>Bacillota</taxon>
        <taxon>Bacilli</taxon>
        <taxon>Lactobacillales</taxon>
        <taxon>Lactobacillaceae</taxon>
        <taxon>Lactobacillus</taxon>
    </lineage>
</organism>
<gene>
    <name evidence="2" type="primary">trmB</name>
    <name type="ordered locus">LJ_1667</name>
</gene>
<sequence>MRLRNKPWAQKLVAEHPEVILNEPDPDKKINWEERFEDFSKPLAIEIGSGKGQFITTLAKEHPEMNFIGVELQTTAAGMILRTKLEEKIDNLQLMCADAANIAMYLPENSVDIVYLNFSDPWPKTRHEKRRLTYKSFLDKYRQILKPEGHLEFKTDNRGLFEYSLVSLNNYGMKFDYVSLDLHHADDEIFERNVETEYEHKFAAKGNPIYCLHAHFVK</sequence>
<feature type="chain" id="PRO_0000171337" description="tRNA (guanine-N(7)-)-methyltransferase">
    <location>
        <begin position="1"/>
        <end position="218"/>
    </location>
</feature>
<feature type="region of interest" description="Interaction with RNA" evidence="2">
    <location>
        <begin position="126"/>
        <end position="131"/>
    </location>
</feature>
<feature type="active site" evidence="1">
    <location>
        <position position="120"/>
    </location>
</feature>
<feature type="binding site" evidence="2">
    <location>
        <position position="46"/>
    </location>
    <ligand>
        <name>S-adenosyl-L-methionine</name>
        <dbReference type="ChEBI" id="CHEBI:59789"/>
    </ligand>
</feature>
<feature type="binding site" evidence="2">
    <location>
        <position position="71"/>
    </location>
    <ligand>
        <name>S-adenosyl-L-methionine</name>
        <dbReference type="ChEBI" id="CHEBI:59789"/>
    </ligand>
</feature>
<feature type="binding site" evidence="2">
    <location>
        <position position="98"/>
    </location>
    <ligand>
        <name>S-adenosyl-L-methionine</name>
        <dbReference type="ChEBI" id="CHEBI:59789"/>
    </ligand>
</feature>
<feature type="binding site" evidence="2">
    <location>
        <position position="120"/>
    </location>
    <ligand>
        <name>S-adenosyl-L-methionine</name>
        <dbReference type="ChEBI" id="CHEBI:59789"/>
    </ligand>
</feature>
<feature type="binding site" evidence="2">
    <location>
        <position position="124"/>
    </location>
    <ligand>
        <name>substrate</name>
    </ligand>
</feature>
<feature type="binding site" evidence="2">
    <location>
        <position position="156"/>
    </location>
    <ligand>
        <name>substrate</name>
    </ligand>
</feature>
<feature type="binding site" evidence="2">
    <location>
        <begin position="196"/>
        <end position="199"/>
    </location>
    <ligand>
        <name>substrate</name>
    </ligand>
</feature>
<reference key="1">
    <citation type="journal article" date="2004" name="Proc. Natl. Acad. Sci. U.S.A.">
        <title>The genome sequence of the probiotic intestinal bacterium Lactobacillus johnsonii NCC 533.</title>
        <authorList>
            <person name="Pridmore R.D."/>
            <person name="Berger B."/>
            <person name="Desiere F."/>
            <person name="Vilanova D."/>
            <person name="Barretto C."/>
            <person name="Pittet A.-C."/>
            <person name="Zwahlen M.-C."/>
            <person name="Rouvet M."/>
            <person name="Altermann E."/>
            <person name="Barrangou R."/>
            <person name="Mollet B."/>
            <person name="Mercenier A."/>
            <person name="Klaenhammer T."/>
            <person name="Arigoni F."/>
            <person name="Schell M.A."/>
        </authorList>
    </citation>
    <scope>NUCLEOTIDE SEQUENCE [LARGE SCALE GENOMIC DNA]</scope>
    <source>
        <strain>CNCM I-1225 / La1 / NCC 533</strain>
    </source>
</reference>
<evidence type="ECO:0000250" key="1"/>
<evidence type="ECO:0000255" key="2">
    <source>
        <dbReference type="HAMAP-Rule" id="MF_01057"/>
    </source>
</evidence>
<keyword id="KW-0489">Methyltransferase</keyword>
<keyword id="KW-0949">S-adenosyl-L-methionine</keyword>
<keyword id="KW-0808">Transferase</keyword>
<keyword id="KW-0819">tRNA processing</keyword>
<name>TRMB_LACJO</name>
<accession>Q74I98</accession>
<proteinExistence type="inferred from homology"/>
<comment type="function">
    <text evidence="2">Catalyzes the formation of N(7)-methylguanine at position 46 (m7G46) in tRNA.</text>
</comment>
<comment type="catalytic activity">
    <reaction evidence="2">
        <text>guanosine(46) in tRNA + S-adenosyl-L-methionine = N(7)-methylguanosine(46) in tRNA + S-adenosyl-L-homocysteine</text>
        <dbReference type="Rhea" id="RHEA:42708"/>
        <dbReference type="Rhea" id="RHEA-COMP:10188"/>
        <dbReference type="Rhea" id="RHEA-COMP:10189"/>
        <dbReference type="ChEBI" id="CHEBI:57856"/>
        <dbReference type="ChEBI" id="CHEBI:59789"/>
        <dbReference type="ChEBI" id="CHEBI:74269"/>
        <dbReference type="ChEBI" id="CHEBI:74480"/>
        <dbReference type="EC" id="2.1.1.33"/>
    </reaction>
</comment>
<comment type="pathway">
    <text evidence="2">tRNA modification; N(7)-methylguanine-tRNA biosynthesis.</text>
</comment>
<comment type="similarity">
    <text evidence="2">Belongs to the class I-like SAM-binding methyltransferase superfamily. TrmB family.</text>
</comment>
<protein>
    <recommendedName>
        <fullName evidence="2">tRNA (guanine-N(7)-)-methyltransferase</fullName>
        <ecNumber evidence="2">2.1.1.33</ecNumber>
    </recommendedName>
    <alternativeName>
        <fullName evidence="2">tRNA (guanine(46)-N(7))-methyltransferase</fullName>
    </alternativeName>
    <alternativeName>
        <fullName evidence="2">tRNA(m7G46)-methyltransferase</fullName>
    </alternativeName>
</protein>